<name>Y106_STAAR</name>
<reference key="1">
    <citation type="journal article" date="2004" name="Proc. Natl. Acad. Sci. U.S.A.">
        <title>Complete genomes of two clinical Staphylococcus aureus strains: evidence for the rapid evolution of virulence and drug resistance.</title>
        <authorList>
            <person name="Holden M.T.G."/>
            <person name="Feil E.J."/>
            <person name="Lindsay J.A."/>
            <person name="Peacock S.J."/>
            <person name="Day N.P.J."/>
            <person name="Enright M.C."/>
            <person name="Foster T.J."/>
            <person name="Moore C.E."/>
            <person name="Hurst L."/>
            <person name="Atkin R."/>
            <person name="Barron A."/>
            <person name="Bason N."/>
            <person name="Bentley S.D."/>
            <person name="Chillingworth C."/>
            <person name="Chillingworth T."/>
            <person name="Churcher C."/>
            <person name="Clark L."/>
            <person name="Corton C."/>
            <person name="Cronin A."/>
            <person name="Doggett J."/>
            <person name="Dowd L."/>
            <person name="Feltwell T."/>
            <person name="Hance Z."/>
            <person name="Harris B."/>
            <person name="Hauser H."/>
            <person name="Holroyd S."/>
            <person name="Jagels K."/>
            <person name="James K.D."/>
            <person name="Lennard N."/>
            <person name="Line A."/>
            <person name="Mayes R."/>
            <person name="Moule S."/>
            <person name="Mungall K."/>
            <person name="Ormond D."/>
            <person name="Quail M.A."/>
            <person name="Rabbinowitsch E."/>
            <person name="Rutherford K.M."/>
            <person name="Sanders M."/>
            <person name="Sharp S."/>
            <person name="Simmonds M."/>
            <person name="Stevens K."/>
            <person name="Whitehead S."/>
            <person name="Barrell B.G."/>
            <person name="Spratt B.G."/>
            <person name="Parkhill J."/>
        </authorList>
    </citation>
    <scope>NUCLEOTIDE SEQUENCE [LARGE SCALE GENOMIC DNA]</scope>
    <source>
        <strain>MRSA252</strain>
    </source>
</reference>
<proteinExistence type="inferred from homology"/>
<organism>
    <name type="scientific">Staphylococcus aureus (strain MRSA252)</name>
    <dbReference type="NCBI Taxonomy" id="282458"/>
    <lineage>
        <taxon>Bacteria</taxon>
        <taxon>Bacillati</taxon>
        <taxon>Bacillota</taxon>
        <taxon>Bacilli</taxon>
        <taxon>Bacillales</taxon>
        <taxon>Staphylococcaceae</taxon>
        <taxon>Staphylococcus</taxon>
    </lineage>
</organism>
<evidence type="ECO:0000255" key="1">
    <source>
        <dbReference type="PROSITE-ProRule" id="PRU00303"/>
    </source>
</evidence>
<evidence type="ECO:0000305" key="2"/>
<comment type="subcellular location">
    <subcellularLocation>
        <location evidence="1">Cell membrane</location>
        <topology evidence="1">Lipid-anchor</topology>
    </subcellularLocation>
</comment>
<comment type="similarity">
    <text evidence="2">Belongs to the staphylococcal tandem lipoprotein family.</text>
</comment>
<comment type="sequence caution" evidence="2">
    <conflict type="erroneous initiation">
        <sequence resource="EMBL-CDS" id="CAG39132"/>
    </conflict>
</comment>
<gene>
    <name type="ordered locus">SAR0106</name>
</gene>
<dbReference type="EMBL" id="BX571856">
    <property type="protein sequence ID" value="CAG39132.1"/>
    <property type="status" value="ALT_INIT"/>
    <property type="molecule type" value="Genomic_DNA"/>
</dbReference>
<dbReference type="SMR" id="Q6GKK2"/>
<dbReference type="KEGG" id="sar:SAR0106"/>
<dbReference type="HOGENOM" id="CLU_071589_0_0_9"/>
<dbReference type="Proteomes" id="UP000000596">
    <property type="component" value="Chromosome"/>
</dbReference>
<dbReference type="GO" id="GO:0005886">
    <property type="term" value="C:plasma membrane"/>
    <property type="evidence" value="ECO:0007669"/>
    <property type="project" value="UniProtKB-SubCell"/>
</dbReference>
<dbReference type="Gene3D" id="2.50.20.40">
    <property type="match status" value="1"/>
</dbReference>
<dbReference type="InterPro" id="IPR007595">
    <property type="entry name" value="Csa"/>
</dbReference>
<dbReference type="InterPro" id="IPR038641">
    <property type="entry name" value="Csa_sf"/>
</dbReference>
<dbReference type="NCBIfam" id="TIGR01742">
    <property type="entry name" value="SA_tandem_lipo"/>
    <property type="match status" value="1"/>
</dbReference>
<dbReference type="Pfam" id="PF04507">
    <property type="entry name" value="DUF576"/>
    <property type="match status" value="1"/>
</dbReference>
<dbReference type="PROSITE" id="PS51257">
    <property type="entry name" value="PROKAR_LIPOPROTEIN"/>
    <property type="match status" value="1"/>
</dbReference>
<protein>
    <recommendedName>
        <fullName>Uncharacterized lipoprotein SAR0106</fullName>
    </recommendedName>
</protein>
<keyword id="KW-1003">Cell membrane</keyword>
<keyword id="KW-0449">Lipoprotein</keyword>
<keyword id="KW-0472">Membrane</keyword>
<keyword id="KW-0564">Palmitate</keyword>
<keyword id="KW-0732">Signal</keyword>
<feature type="signal peptide" evidence="1">
    <location>
        <begin position="1"/>
        <end position="23"/>
    </location>
</feature>
<feature type="chain" id="PRO_0000282151" description="Uncharacterized lipoprotein SAR0106">
    <location>
        <begin position="24"/>
        <end position="255"/>
    </location>
</feature>
<feature type="lipid moiety-binding region" description="N-palmitoyl cysteine" evidence="1">
    <location>
        <position position="24"/>
    </location>
</feature>
<feature type="lipid moiety-binding region" description="S-diacylglycerol cysteine" evidence="1">
    <location>
        <position position="24"/>
    </location>
</feature>
<accession>Q6GKK2</accession>
<sequence>MKRLNKLVLGINLLFLVISITAGCGMGKEAEIKKSFEKTLSMYPIKNLEDLYDKEGYRDDQFDKNDKGTWIVRSSMSIQPNGKDMNVKGMVLYMNRNSRTTNGYYYVDVIERQDKGIHRDNEKKYPVKMVDNKIIPTKDIKDENIKKEIENFKFFAQYGSFKDLSKYKEGDISYNPEVPSYSAKYQLTNDDYNVKQLRKRYDIPTNKAPKLLLKGTGNLKGSSVGYKDIEFTFVEKKGENIYFSDSLHLEPSEDK</sequence>